<name>HSLU_BRASO</name>
<accession>A4YJU7</accession>
<reference key="1">
    <citation type="journal article" date="2007" name="Science">
        <title>Legumes symbioses: absence of nod genes in photosynthetic bradyrhizobia.</title>
        <authorList>
            <person name="Giraud E."/>
            <person name="Moulin L."/>
            <person name="Vallenet D."/>
            <person name="Barbe V."/>
            <person name="Cytryn E."/>
            <person name="Avarre J.-C."/>
            <person name="Jaubert M."/>
            <person name="Simon D."/>
            <person name="Cartieaux F."/>
            <person name="Prin Y."/>
            <person name="Bena G."/>
            <person name="Hannibal L."/>
            <person name="Fardoux J."/>
            <person name="Kojadinovic M."/>
            <person name="Vuillet L."/>
            <person name="Lajus A."/>
            <person name="Cruveiller S."/>
            <person name="Rouy Z."/>
            <person name="Mangenot S."/>
            <person name="Segurens B."/>
            <person name="Dossat C."/>
            <person name="Franck W.L."/>
            <person name="Chang W.-S."/>
            <person name="Saunders E."/>
            <person name="Bruce D."/>
            <person name="Richardson P."/>
            <person name="Normand P."/>
            <person name="Dreyfus B."/>
            <person name="Pignol D."/>
            <person name="Stacey G."/>
            <person name="Emerich D."/>
            <person name="Vermeglio A."/>
            <person name="Medigue C."/>
            <person name="Sadowsky M."/>
        </authorList>
    </citation>
    <scope>NUCLEOTIDE SEQUENCE [LARGE SCALE GENOMIC DNA]</scope>
    <source>
        <strain>ORS 278</strain>
    </source>
</reference>
<feature type="chain" id="PRO_1000012706" description="ATP-dependent protease ATPase subunit HslU">
    <location>
        <begin position="1"/>
        <end position="434"/>
    </location>
</feature>
<feature type="binding site" evidence="1">
    <location>
        <position position="18"/>
    </location>
    <ligand>
        <name>ATP</name>
        <dbReference type="ChEBI" id="CHEBI:30616"/>
    </ligand>
</feature>
<feature type="binding site" evidence="1">
    <location>
        <begin position="60"/>
        <end position="65"/>
    </location>
    <ligand>
        <name>ATP</name>
        <dbReference type="ChEBI" id="CHEBI:30616"/>
    </ligand>
</feature>
<feature type="binding site" evidence="1">
    <location>
        <position position="247"/>
    </location>
    <ligand>
        <name>ATP</name>
        <dbReference type="ChEBI" id="CHEBI:30616"/>
    </ligand>
</feature>
<feature type="binding site" evidence="1">
    <location>
        <position position="312"/>
    </location>
    <ligand>
        <name>ATP</name>
        <dbReference type="ChEBI" id="CHEBI:30616"/>
    </ligand>
</feature>
<feature type="binding site" evidence="1">
    <location>
        <position position="384"/>
    </location>
    <ligand>
        <name>ATP</name>
        <dbReference type="ChEBI" id="CHEBI:30616"/>
    </ligand>
</feature>
<evidence type="ECO:0000255" key="1">
    <source>
        <dbReference type="HAMAP-Rule" id="MF_00249"/>
    </source>
</evidence>
<organism>
    <name type="scientific">Bradyrhizobium sp. (strain ORS 278)</name>
    <dbReference type="NCBI Taxonomy" id="114615"/>
    <lineage>
        <taxon>Bacteria</taxon>
        <taxon>Pseudomonadati</taxon>
        <taxon>Pseudomonadota</taxon>
        <taxon>Alphaproteobacteria</taxon>
        <taxon>Hyphomicrobiales</taxon>
        <taxon>Nitrobacteraceae</taxon>
        <taxon>Bradyrhizobium</taxon>
    </lineage>
</organism>
<protein>
    <recommendedName>
        <fullName evidence="1">ATP-dependent protease ATPase subunit HslU</fullName>
    </recommendedName>
    <alternativeName>
        <fullName evidence="1">Unfoldase HslU</fullName>
    </alternativeName>
</protein>
<dbReference type="EMBL" id="CU234118">
    <property type="protein sequence ID" value="CAL74173.1"/>
    <property type="molecule type" value="Genomic_DNA"/>
</dbReference>
<dbReference type="RefSeq" id="WP_011923461.1">
    <property type="nucleotide sequence ID" value="NC_009445.1"/>
</dbReference>
<dbReference type="SMR" id="A4YJU7"/>
<dbReference type="STRING" id="114615.BRADO0208"/>
<dbReference type="KEGG" id="bra:BRADO0208"/>
<dbReference type="eggNOG" id="COG1220">
    <property type="taxonomic scope" value="Bacteria"/>
</dbReference>
<dbReference type="HOGENOM" id="CLU_033123_0_0_5"/>
<dbReference type="OrthoDB" id="9804062at2"/>
<dbReference type="Proteomes" id="UP000001994">
    <property type="component" value="Chromosome"/>
</dbReference>
<dbReference type="GO" id="GO:0009376">
    <property type="term" value="C:HslUV protease complex"/>
    <property type="evidence" value="ECO:0007669"/>
    <property type="project" value="UniProtKB-UniRule"/>
</dbReference>
<dbReference type="GO" id="GO:0005524">
    <property type="term" value="F:ATP binding"/>
    <property type="evidence" value="ECO:0007669"/>
    <property type="project" value="UniProtKB-UniRule"/>
</dbReference>
<dbReference type="GO" id="GO:0016887">
    <property type="term" value="F:ATP hydrolysis activity"/>
    <property type="evidence" value="ECO:0007669"/>
    <property type="project" value="InterPro"/>
</dbReference>
<dbReference type="GO" id="GO:0008233">
    <property type="term" value="F:peptidase activity"/>
    <property type="evidence" value="ECO:0007669"/>
    <property type="project" value="InterPro"/>
</dbReference>
<dbReference type="GO" id="GO:0036402">
    <property type="term" value="F:proteasome-activating activity"/>
    <property type="evidence" value="ECO:0007669"/>
    <property type="project" value="UniProtKB-UniRule"/>
</dbReference>
<dbReference type="GO" id="GO:0043335">
    <property type="term" value="P:protein unfolding"/>
    <property type="evidence" value="ECO:0007669"/>
    <property type="project" value="UniProtKB-UniRule"/>
</dbReference>
<dbReference type="GO" id="GO:0051603">
    <property type="term" value="P:proteolysis involved in protein catabolic process"/>
    <property type="evidence" value="ECO:0007669"/>
    <property type="project" value="TreeGrafter"/>
</dbReference>
<dbReference type="CDD" id="cd19498">
    <property type="entry name" value="RecA-like_HslU"/>
    <property type="match status" value="1"/>
</dbReference>
<dbReference type="FunFam" id="3.40.50.300:FF:000213">
    <property type="entry name" value="ATP-dependent protease ATPase subunit HslU"/>
    <property type="match status" value="1"/>
</dbReference>
<dbReference type="FunFam" id="3.40.50.300:FF:000220">
    <property type="entry name" value="ATP-dependent protease ATPase subunit HslU"/>
    <property type="match status" value="1"/>
</dbReference>
<dbReference type="Gene3D" id="1.10.8.60">
    <property type="match status" value="1"/>
</dbReference>
<dbReference type="Gene3D" id="3.40.50.300">
    <property type="entry name" value="P-loop containing nucleotide triphosphate hydrolases"/>
    <property type="match status" value="2"/>
</dbReference>
<dbReference type="HAMAP" id="MF_00249">
    <property type="entry name" value="HslU"/>
    <property type="match status" value="1"/>
</dbReference>
<dbReference type="InterPro" id="IPR003593">
    <property type="entry name" value="AAA+_ATPase"/>
</dbReference>
<dbReference type="InterPro" id="IPR050052">
    <property type="entry name" value="ATP-dep_Clp_protease_ClpX"/>
</dbReference>
<dbReference type="InterPro" id="IPR003959">
    <property type="entry name" value="ATPase_AAA_core"/>
</dbReference>
<dbReference type="InterPro" id="IPR019489">
    <property type="entry name" value="Clp_ATPase_C"/>
</dbReference>
<dbReference type="InterPro" id="IPR004491">
    <property type="entry name" value="HslU"/>
</dbReference>
<dbReference type="InterPro" id="IPR027417">
    <property type="entry name" value="P-loop_NTPase"/>
</dbReference>
<dbReference type="NCBIfam" id="TIGR00390">
    <property type="entry name" value="hslU"/>
    <property type="match status" value="1"/>
</dbReference>
<dbReference type="NCBIfam" id="NF003544">
    <property type="entry name" value="PRK05201.1"/>
    <property type="match status" value="1"/>
</dbReference>
<dbReference type="PANTHER" id="PTHR48102">
    <property type="entry name" value="ATP-DEPENDENT CLP PROTEASE ATP-BINDING SUBUNIT CLPX-LIKE, MITOCHONDRIAL-RELATED"/>
    <property type="match status" value="1"/>
</dbReference>
<dbReference type="PANTHER" id="PTHR48102:SF3">
    <property type="entry name" value="ATP-DEPENDENT PROTEASE ATPASE SUBUNIT HSLU"/>
    <property type="match status" value="1"/>
</dbReference>
<dbReference type="Pfam" id="PF00004">
    <property type="entry name" value="AAA"/>
    <property type="match status" value="1"/>
</dbReference>
<dbReference type="Pfam" id="PF07724">
    <property type="entry name" value="AAA_2"/>
    <property type="match status" value="1"/>
</dbReference>
<dbReference type="Pfam" id="PF10431">
    <property type="entry name" value="ClpB_D2-small"/>
    <property type="match status" value="1"/>
</dbReference>
<dbReference type="SMART" id="SM00382">
    <property type="entry name" value="AAA"/>
    <property type="match status" value="1"/>
</dbReference>
<dbReference type="SMART" id="SM01086">
    <property type="entry name" value="ClpB_D2-small"/>
    <property type="match status" value="1"/>
</dbReference>
<dbReference type="SUPFAM" id="SSF52540">
    <property type="entry name" value="P-loop containing nucleoside triphosphate hydrolases"/>
    <property type="match status" value="1"/>
</dbReference>
<keyword id="KW-0067">ATP-binding</keyword>
<keyword id="KW-0143">Chaperone</keyword>
<keyword id="KW-0963">Cytoplasm</keyword>
<keyword id="KW-0547">Nucleotide-binding</keyword>
<keyword id="KW-1185">Reference proteome</keyword>
<keyword id="KW-0346">Stress response</keyword>
<sequence length="434" mass="47770">MTDFSPREIVSELDRFIVGQADAKRAVSIALRNRWRRLQLDTGLREEVLPKNILMIGPTGVGKTEIARRLAKLAGAPFLKVEATKFTEVGYVGRDVEQIIRDLVEVAIHQVRERKRKDVAARAQLAAEERVLDALVGANSSAATRDSFRRKLRAGELNDKEIEIETQSSGGGMPMFEIPGMPGAQMGAISIGDIFGKLGGRTKTRRVTVEASHDILIAEESDKLLDSDQLVQEAINVVENNGIVFLDEIDKICVRENRHGGDVSREGVQRDLLPLIEGTTVSTKHGAVKTDHILFIASGAFHIAKPSDLLPELQGRLPIRVELQALTRDDMRRILTEPEASLIKQYVALMKTEGVTLDITDDAIDALADVAVAVNSTVENIGARRLQTVMERVLDDISFTASDRTGETMRVDAAYVQQHIGDLAKNADLSRFIL</sequence>
<comment type="function">
    <text evidence="1">ATPase subunit of a proteasome-like degradation complex; this subunit has chaperone activity. The binding of ATP and its subsequent hydrolysis by HslU are essential for unfolding of protein substrates subsequently hydrolyzed by HslV. HslU recognizes the N-terminal part of its protein substrates and unfolds these before they are guided to HslV for hydrolysis.</text>
</comment>
<comment type="subunit">
    <text evidence="1">A double ring-shaped homohexamer of HslV is capped on each side by a ring-shaped HslU homohexamer. The assembly of the HslU/HslV complex is dependent on binding of ATP.</text>
</comment>
<comment type="subcellular location">
    <subcellularLocation>
        <location evidence="1">Cytoplasm</location>
    </subcellularLocation>
</comment>
<comment type="similarity">
    <text evidence="1">Belongs to the ClpX chaperone family. HslU subfamily.</text>
</comment>
<gene>
    <name evidence="1" type="primary">hslU</name>
    <name type="ordered locus">BRADO0208</name>
</gene>
<proteinExistence type="inferred from homology"/>